<feature type="peptide" id="PRO_0000378863" description="Sulfakinin-1" evidence="3">
    <location>
        <begin position="1"/>
        <end position="11"/>
    </location>
</feature>
<feature type="modified residue" description="Sulfotyrosine" evidence="1">
    <location>
        <position position="6"/>
    </location>
</feature>
<feature type="modified residue" description="Phenylalanine amide" evidence="3">
    <location>
        <position position="11"/>
    </location>
</feature>
<protein>
    <recommendedName>
        <fullName evidence="4">Sulfakinin-1</fullName>
        <shortName evidence="4">BlaGe-SK-1</shortName>
    </recommendedName>
</protein>
<dbReference type="GO" id="GO:0005576">
    <property type="term" value="C:extracellular region"/>
    <property type="evidence" value="ECO:0007669"/>
    <property type="project" value="UniProtKB-SubCell"/>
</dbReference>
<dbReference type="GO" id="GO:0005179">
    <property type="term" value="F:hormone activity"/>
    <property type="evidence" value="ECO:0007669"/>
    <property type="project" value="UniProtKB-KW"/>
</dbReference>
<dbReference type="GO" id="GO:0007218">
    <property type="term" value="P:neuropeptide signaling pathway"/>
    <property type="evidence" value="ECO:0007669"/>
    <property type="project" value="UniProtKB-KW"/>
</dbReference>
<dbReference type="InterPro" id="IPR013152">
    <property type="entry name" value="Gastrin/cholecystokinin_CS"/>
</dbReference>
<dbReference type="InterPro" id="IPR013259">
    <property type="entry name" value="Sulfakinin"/>
</dbReference>
<dbReference type="Pfam" id="PF08257">
    <property type="entry name" value="Sulfakinin"/>
    <property type="match status" value="1"/>
</dbReference>
<dbReference type="PROSITE" id="PS00259">
    <property type="entry name" value="GASTRIN"/>
    <property type="match status" value="1"/>
</dbReference>
<organism>
    <name type="scientific">Blattella germanica</name>
    <name type="common">German cockroach</name>
    <name type="synonym">Blatta germanica</name>
    <dbReference type="NCBI Taxonomy" id="6973"/>
    <lineage>
        <taxon>Eukaryota</taxon>
        <taxon>Metazoa</taxon>
        <taxon>Ecdysozoa</taxon>
        <taxon>Arthropoda</taxon>
        <taxon>Hexapoda</taxon>
        <taxon>Insecta</taxon>
        <taxon>Pterygota</taxon>
        <taxon>Neoptera</taxon>
        <taxon>Polyneoptera</taxon>
        <taxon>Dictyoptera</taxon>
        <taxon>Blattodea</taxon>
        <taxon>Blaberoidea</taxon>
        <taxon>Blattellidae</taxon>
        <taxon>Blattella</taxon>
    </lineage>
</organism>
<proteinExistence type="evidence at protein level"/>
<comment type="function">
    <text evidence="1">Myotropic peptide.</text>
</comment>
<comment type="subcellular location">
    <subcellularLocation>
        <location evidence="5">Secreted</location>
    </subcellularLocation>
</comment>
<comment type="similarity">
    <text evidence="2">Belongs to the gastrin/cholecystokinin family.</text>
</comment>
<name>SK1_BLAGE</name>
<sequence length="11" mass="1445">EQFDDYGHMRF</sequence>
<reference evidence="5" key="1">
    <citation type="journal article" date="2009" name="BMC Evol. Biol.">
        <title>A proteomic approach for studying insect phylogeny: CAPA peptides of ancient insect taxa (Dictyoptera, Blattoptera) as a test case.</title>
        <authorList>
            <person name="Roth S."/>
            <person name="Fromm B."/>
            <person name="Gaede G."/>
            <person name="Predel R."/>
        </authorList>
    </citation>
    <scope>PROTEIN SEQUENCE</scope>
    <scope>AMIDATION AT PHE-11</scope>
    <source>
        <tissue evidence="3">Corpora cardiaca</tissue>
    </source>
</reference>
<accession>P85555</accession>
<evidence type="ECO:0000250" key="1">
    <source>
        <dbReference type="UniProtKB" id="P41493"/>
    </source>
</evidence>
<evidence type="ECO:0000255" key="2"/>
<evidence type="ECO:0000269" key="3">
    <source>
    </source>
</evidence>
<evidence type="ECO:0000303" key="4">
    <source>
    </source>
</evidence>
<evidence type="ECO:0000305" key="5"/>
<keyword id="KW-0027">Amidation</keyword>
<keyword id="KW-0903">Direct protein sequencing</keyword>
<keyword id="KW-0372">Hormone</keyword>
<keyword id="KW-0527">Neuropeptide</keyword>
<keyword id="KW-0964">Secreted</keyword>
<keyword id="KW-0765">Sulfation</keyword>